<reference key="1">
    <citation type="journal article" date="2006" name="PLoS Genet.">
        <title>Comparative genomics of emerging human ehrlichiosis agents.</title>
        <authorList>
            <person name="Dunning Hotopp J.C."/>
            <person name="Lin M."/>
            <person name="Madupu R."/>
            <person name="Crabtree J."/>
            <person name="Angiuoli S.V."/>
            <person name="Eisen J.A."/>
            <person name="Seshadri R."/>
            <person name="Ren Q."/>
            <person name="Wu M."/>
            <person name="Utterback T.R."/>
            <person name="Smith S."/>
            <person name="Lewis M."/>
            <person name="Khouri H."/>
            <person name="Zhang C."/>
            <person name="Niu H."/>
            <person name="Lin Q."/>
            <person name="Ohashi N."/>
            <person name="Zhi N."/>
            <person name="Nelson W.C."/>
            <person name="Brinkac L.M."/>
            <person name="Dodson R.J."/>
            <person name="Rosovitz M.J."/>
            <person name="Sundaram J.P."/>
            <person name="Daugherty S.C."/>
            <person name="Davidsen T."/>
            <person name="Durkin A.S."/>
            <person name="Gwinn M.L."/>
            <person name="Haft D.H."/>
            <person name="Selengut J.D."/>
            <person name="Sullivan S.A."/>
            <person name="Zafar N."/>
            <person name="Zhou L."/>
            <person name="Benahmed F."/>
            <person name="Forberger H."/>
            <person name="Halpin R."/>
            <person name="Mulligan S."/>
            <person name="Robinson J."/>
            <person name="White O."/>
            <person name="Rikihisa Y."/>
            <person name="Tettelin H."/>
        </authorList>
    </citation>
    <scope>NUCLEOTIDE SEQUENCE [LARGE SCALE GENOMIC DNA]</scope>
    <source>
        <strain>ATCC CRL-10679 / Arkansas</strain>
    </source>
</reference>
<keyword id="KW-1185">Reference proteome</keyword>
<keyword id="KW-0687">Ribonucleoprotein</keyword>
<keyword id="KW-0689">Ribosomal protein</keyword>
<keyword id="KW-0694">RNA-binding</keyword>
<keyword id="KW-0699">rRNA-binding</keyword>
<sequence length="109" mass="12640">MPLYEFTFIAQQGLTQYELEGLVKGLSSLLTKNGAELLKYEYWGLLDFAYTIDKMNKGHYCMIYIKATPSSMDEFKRKVRLNEDILRFLCLKKDKLPKGDSLMIQASQV</sequence>
<proteinExistence type="inferred from homology"/>
<accession>Q2GHF4</accession>
<comment type="function">
    <text evidence="1">Binds together with bS18 to 16S ribosomal RNA.</text>
</comment>
<comment type="similarity">
    <text evidence="1">Belongs to the bacterial ribosomal protein bS6 family.</text>
</comment>
<protein>
    <recommendedName>
        <fullName evidence="1">Small ribosomal subunit protein bS6</fullName>
    </recommendedName>
    <alternativeName>
        <fullName evidence="2">30S ribosomal protein S6</fullName>
    </alternativeName>
</protein>
<name>RS6_EHRCR</name>
<evidence type="ECO:0000255" key="1">
    <source>
        <dbReference type="HAMAP-Rule" id="MF_00360"/>
    </source>
</evidence>
<evidence type="ECO:0000305" key="2"/>
<organism>
    <name type="scientific">Ehrlichia chaffeensis (strain ATCC CRL-10679 / Arkansas)</name>
    <dbReference type="NCBI Taxonomy" id="205920"/>
    <lineage>
        <taxon>Bacteria</taxon>
        <taxon>Pseudomonadati</taxon>
        <taxon>Pseudomonadota</taxon>
        <taxon>Alphaproteobacteria</taxon>
        <taxon>Rickettsiales</taxon>
        <taxon>Anaplasmataceae</taxon>
        <taxon>Ehrlichia</taxon>
    </lineage>
</organism>
<gene>
    <name evidence="1" type="primary">rpsF</name>
    <name type="ordered locus">ECH_0308</name>
</gene>
<feature type="chain" id="PRO_1000005260" description="Small ribosomal subunit protein bS6">
    <location>
        <begin position="1"/>
        <end position="109"/>
    </location>
</feature>
<dbReference type="EMBL" id="CP000236">
    <property type="protein sequence ID" value="ABD45370.1"/>
    <property type="molecule type" value="Genomic_DNA"/>
</dbReference>
<dbReference type="RefSeq" id="WP_006011331.1">
    <property type="nucleotide sequence ID" value="NC_007799.1"/>
</dbReference>
<dbReference type="SMR" id="Q2GHF4"/>
<dbReference type="STRING" id="205920.ECH_0308"/>
<dbReference type="KEGG" id="ech:ECH_0308"/>
<dbReference type="eggNOG" id="COG0360">
    <property type="taxonomic scope" value="Bacteria"/>
</dbReference>
<dbReference type="HOGENOM" id="CLU_113441_5_3_5"/>
<dbReference type="OrthoDB" id="9812702at2"/>
<dbReference type="Proteomes" id="UP000008320">
    <property type="component" value="Chromosome"/>
</dbReference>
<dbReference type="GO" id="GO:0005737">
    <property type="term" value="C:cytoplasm"/>
    <property type="evidence" value="ECO:0007669"/>
    <property type="project" value="UniProtKB-ARBA"/>
</dbReference>
<dbReference type="GO" id="GO:1990904">
    <property type="term" value="C:ribonucleoprotein complex"/>
    <property type="evidence" value="ECO:0007669"/>
    <property type="project" value="UniProtKB-KW"/>
</dbReference>
<dbReference type="GO" id="GO:0005840">
    <property type="term" value="C:ribosome"/>
    <property type="evidence" value="ECO:0007669"/>
    <property type="project" value="UniProtKB-KW"/>
</dbReference>
<dbReference type="GO" id="GO:0070181">
    <property type="term" value="F:small ribosomal subunit rRNA binding"/>
    <property type="evidence" value="ECO:0007669"/>
    <property type="project" value="TreeGrafter"/>
</dbReference>
<dbReference type="GO" id="GO:0003735">
    <property type="term" value="F:structural constituent of ribosome"/>
    <property type="evidence" value="ECO:0007669"/>
    <property type="project" value="InterPro"/>
</dbReference>
<dbReference type="GO" id="GO:0006412">
    <property type="term" value="P:translation"/>
    <property type="evidence" value="ECO:0007669"/>
    <property type="project" value="UniProtKB-UniRule"/>
</dbReference>
<dbReference type="CDD" id="cd00473">
    <property type="entry name" value="bS6"/>
    <property type="match status" value="1"/>
</dbReference>
<dbReference type="Gene3D" id="3.30.70.60">
    <property type="match status" value="1"/>
</dbReference>
<dbReference type="HAMAP" id="MF_00360">
    <property type="entry name" value="Ribosomal_bS6"/>
    <property type="match status" value="1"/>
</dbReference>
<dbReference type="InterPro" id="IPR000529">
    <property type="entry name" value="Ribosomal_bS6"/>
</dbReference>
<dbReference type="InterPro" id="IPR035980">
    <property type="entry name" value="Ribosomal_bS6_sf"/>
</dbReference>
<dbReference type="InterPro" id="IPR020814">
    <property type="entry name" value="Ribosomal_S6_plastid/chlpt"/>
</dbReference>
<dbReference type="InterPro" id="IPR014717">
    <property type="entry name" value="Transl_elong_EF1B/ribsomal_bS6"/>
</dbReference>
<dbReference type="NCBIfam" id="TIGR00166">
    <property type="entry name" value="S6"/>
    <property type="match status" value="1"/>
</dbReference>
<dbReference type="PANTHER" id="PTHR21011">
    <property type="entry name" value="MITOCHONDRIAL 28S RIBOSOMAL PROTEIN S6"/>
    <property type="match status" value="1"/>
</dbReference>
<dbReference type="PANTHER" id="PTHR21011:SF1">
    <property type="entry name" value="SMALL RIBOSOMAL SUBUNIT PROTEIN BS6M"/>
    <property type="match status" value="1"/>
</dbReference>
<dbReference type="Pfam" id="PF01250">
    <property type="entry name" value="Ribosomal_S6"/>
    <property type="match status" value="1"/>
</dbReference>
<dbReference type="SUPFAM" id="SSF54995">
    <property type="entry name" value="Ribosomal protein S6"/>
    <property type="match status" value="1"/>
</dbReference>